<accession>Q3KR53</accession>
<organism>
    <name type="scientific">Rattus norvegicus</name>
    <name type="common">Rat</name>
    <dbReference type="NCBI Taxonomy" id="10116"/>
    <lineage>
        <taxon>Eukaryota</taxon>
        <taxon>Metazoa</taxon>
        <taxon>Chordata</taxon>
        <taxon>Craniata</taxon>
        <taxon>Vertebrata</taxon>
        <taxon>Euteleostomi</taxon>
        <taxon>Mammalia</taxon>
        <taxon>Eutheria</taxon>
        <taxon>Euarchontoglires</taxon>
        <taxon>Glires</taxon>
        <taxon>Rodentia</taxon>
        <taxon>Myomorpha</taxon>
        <taxon>Muroidea</taxon>
        <taxon>Muridae</taxon>
        <taxon>Murinae</taxon>
        <taxon>Rattus</taxon>
    </lineage>
</organism>
<dbReference type="EMBL" id="BC105913">
    <property type="protein sequence ID" value="AAI05914.1"/>
    <property type="molecule type" value="mRNA"/>
</dbReference>
<dbReference type="RefSeq" id="NP_001030085.1">
    <property type="nucleotide sequence ID" value="NM_001034913.2"/>
</dbReference>
<dbReference type="RefSeq" id="NP_001389033.1">
    <property type="nucleotide sequence ID" value="NM_001402104.1"/>
</dbReference>
<dbReference type="RefSeq" id="XP_017448875.1">
    <property type="nucleotide sequence ID" value="XM_017593386.1"/>
</dbReference>
<dbReference type="RefSeq" id="XP_017448876.1">
    <property type="nucleotide sequence ID" value="XM_017593387.3"/>
</dbReference>
<dbReference type="RefSeq" id="XP_017448877.1">
    <property type="nucleotide sequence ID" value="XM_017593388.1"/>
</dbReference>
<dbReference type="RefSeq" id="XP_063143804.1">
    <property type="nucleotide sequence ID" value="XM_063287734.1"/>
</dbReference>
<dbReference type="FunCoup" id="Q3KR53">
    <property type="interactions" value="2437"/>
</dbReference>
<dbReference type="STRING" id="10116.ENSRNOP00000068310"/>
<dbReference type="PhosphoSitePlus" id="Q3KR53"/>
<dbReference type="PaxDb" id="10116-ENSRNOP00000068310"/>
<dbReference type="Ensembl" id="ENSRNOT00000076094.3">
    <property type="protein sequence ID" value="ENSRNOP00000068310.1"/>
    <property type="gene ID" value="ENSRNOG00000037595.6"/>
</dbReference>
<dbReference type="GeneID" id="313519"/>
<dbReference type="KEGG" id="rno:313519"/>
<dbReference type="UCSC" id="RGD:1359562">
    <property type="organism name" value="rat"/>
</dbReference>
<dbReference type="AGR" id="RGD:1359562"/>
<dbReference type="CTD" id="60313"/>
<dbReference type="RGD" id="1359562">
    <property type="gene designation" value="Gpbp1l1"/>
</dbReference>
<dbReference type="eggNOG" id="ENOG502QPN2">
    <property type="taxonomic scope" value="Eukaryota"/>
</dbReference>
<dbReference type="GeneTree" id="ENSGT00420000029753"/>
<dbReference type="HOGENOM" id="CLU_045487_0_0_1"/>
<dbReference type="InParanoid" id="Q3KR53"/>
<dbReference type="OMA" id="AGRQNNQ"/>
<dbReference type="OrthoDB" id="8741226at2759"/>
<dbReference type="PhylomeDB" id="Q3KR53"/>
<dbReference type="TreeFam" id="TF332220"/>
<dbReference type="PRO" id="PR:Q3KR53"/>
<dbReference type="Proteomes" id="UP000002494">
    <property type="component" value="Chromosome 5"/>
</dbReference>
<dbReference type="Bgee" id="ENSRNOG00000037595">
    <property type="expression patterns" value="Expressed in lung and 19 other cell types or tissues"/>
</dbReference>
<dbReference type="GO" id="GO:0005634">
    <property type="term" value="C:nucleus"/>
    <property type="evidence" value="ECO:0000318"/>
    <property type="project" value="GO_Central"/>
</dbReference>
<dbReference type="GO" id="GO:0003677">
    <property type="term" value="F:DNA binding"/>
    <property type="evidence" value="ECO:0007669"/>
    <property type="project" value="UniProtKB-KW"/>
</dbReference>
<dbReference type="GO" id="GO:0003723">
    <property type="term" value="F:RNA binding"/>
    <property type="evidence" value="ECO:0007669"/>
    <property type="project" value="InterPro"/>
</dbReference>
<dbReference type="GO" id="GO:0006351">
    <property type="term" value="P:DNA-templated transcription"/>
    <property type="evidence" value="ECO:0007669"/>
    <property type="project" value="InterPro"/>
</dbReference>
<dbReference type="GO" id="GO:0045893">
    <property type="term" value="P:positive regulation of DNA-templated transcription"/>
    <property type="evidence" value="ECO:0007669"/>
    <property type="project" value="InterPro"/>
</dbReference>
<dbReference type="GO" id="GO:0006355">
    <property type="term" value="P:regulation of DNA-templated transcription"/>
    <property type="evidence" value="ECO:0000318"/>
    <property type="project" value="GO_Central"/>
</dbReference>
<dbReference type="InterPro" id="IPR028128">
    <property type="entry name" value="Vasculin_fam"/>
</dbReference>
<dbReference type="PANTHER" id="PTHR14339">
    <property type="entry name" value="VASCULIN"/>
    <property type="match status" value="1"/>
</dbReference>
<dbReference type="PANTHER" id="PTHR14339:SF10">
    <property type="entry name" value="VASCULIN-LIKE PROTEIN 1"/>
    <property type="match status" value="1"/>
</dbReference>
<dbReference type="Pfam" id="PF15337">
    <property type="entry name" value="Vasculin"/>
    <property type="match status" value="1"/>
</dbReference>
<gene>
    <name type="primary">Gpbp1l1</name>
</gene>
<comment type="function">
    <text evidence="3">Possible transcription factor.</text>
</comment>
<comment type="subcellular location">
    <subcellularLocation>
        <location evidence="3">Nucleus</location>
    </subcellularLocation>
</comment>
<comment type="similarity">
    <text evidence="3">Belongs to the vasculin family.</text>
</comment>
<keyword id="KW-0238">DNA-binding</keyword>
<keyword id="KW-0539">Nucleus</keyword>
<keyword id="KW-0597">Phosphoprotein</keyword>
<keyword id="KW-1185">Reference proteome</keyword>
<keyword id="KW-0804">Transcription</keyword>
<keyword id="KW-0805">Transcription regulation</keyword>
<proteinExistence type="evidence at protein level"/>
<protein>
    <recommendedName>
        <fullName>Vasculin-like protein 1</fullName>
    </recommendedName>
    <alternativeName>
        <fullName>GC-rich promoter-binding protein 1-like 1</fullName>
    </alternativeName>
</protein>
<feature type="chain" id="PRO_0000324118" description="Vasculin-like protein 1">
    <location>
        <begin position="1"/>
        <end position="475"/>
    </location>
</feature>
<feature type="region of interest" description="Disordered" evidence="2">
    <location>
        <begin position="92"/>
        <end position="115"/>
    </location>
</feature>
<feature type="region of interest" description="Disordered" evidence="2">
    <location>
        <begin position="160"/>
        <end position="191"/>
    </location>
</feature>
<feature type="region of interest" description="Disordered" evidence="2">
    <location>
        <begin position="237"/>
        <end position="271"/>
    </location>
</feature>
<feature type="region of interest" description="Disordered" evidence="2">
    <location>
        <begin position="292"/>
        <end position="318"/>
    </location>
</feature>
<feature type="region of interest" description="Disordered" evidence="2">
    <location>
        <begin position="456"/>
        <end position="475"/>
    </location>
</feature>
<feature type="compositionally biased region" description="Low complexity" evidence="2">
    <location>
        <begin position="294"/>
        <end position="311"/>
    </location>
</feature>
<feature type="modified residue" description="Phosphoserine" evidence="1">
    <location>
        <position position="49"/>
    </location>
</feature>
<feature type="modified residue" description="Phosphoserine" evidence="1">
    <location>
        <position position="76"/>
    </location>
</feature>
<feature type="modified residue" description="Phosphoserine" evidence="1">
    <location>
        <position position="202"/>
    </location>
</feature>
<feature type="modified residue" description="Phosphothreonine" evidence="1">
    <location>
        <position position="300"/>
    </location>
</feature>
<feature type="modified residue" description="Phosphoserine" evidence="1">
    <location>
        <position position="383"/>
    </location>
</feature>
<reference key="1">
    <citation type="journal article" date="2004" name="Genome Res.">
        <title>The status, quality, and expansion of the NIH full-length cDNA project: the Mammalian Gene Collection (MGC).</title>
        <authorList>
            <consortium name="The MGC Project Team"/>
        </authorList>
    </citation>
    <scope>NUCLEOTIDE SEQUENCE [LARGE SCALE MRNA]</scope>
    <source>
        <tissue>Thymus</tissue>
    </source>
</reference>
<reference key="2">
    <citation type="journal article" date="2012" name="Nat. Commun.">
        <title>Quantitative maps of protein phosphorylation sites across 14 different rat organs and tissues.</title>
        <authorList>
            <person name="Lundby A."/>
            <person name="Secher A."/>
            <person name="Lage K."/>
            <person name="Nordsborg N.B."/>
            <person name="Dmytriyev A."/>
            <person name="Lundby C."/>
            <person name="Olsen J.V."/>
        </authorList>
    </citation>
    <scope>IDENTIFICATION BY MASS SPECTROMETRY [LARGE SCALE ANALYSIS]</scope>
</reference>
<sequence length="475" mass="52432">MAQHDFVPAWLNFSTPQSAKSSTATFDKHGEHLSRGEGRFGISRRRHNSSDGFFNNGPLRTTGDSWHQPSLFRHDSVDSGVSKGAYAGTTGNLSGWHGSSRGHDGMSQRAGGSTGNHRHWNGSFHSRKGCAFQEKTPTEIREEKKEDKVEKLQFEEEDFPSLNPEAGKQNQPCRPIGTPSGVWENPPSAKQPSKMLVIKKISKEDPAAAFSAAFTSGSHHANGNKVSTMVPSVYKNLVPKPAPPPSKPNAWKANRMEHKPGSLSSSREAALTNPVSVTKPVVLAAGVVLNAPKESPSSTTPPIEISSSRLTKLTRRTTDRKSEFLKTLKDERNEDCSQSRDCDKLEGLRLEGSHTPEPKENGEQGCLQNGLSLPMVEEREVLSHSLEAEHRLLKAMGWQEYPENDESCLPLTEDELKEFHTRTEQLRRNGFVKNGFLQGRSSSLFSPWRSTCIAECEDSDTETSSSETSDDDAWK</sequence>
<evidence type="ECO:0000250" key="1">
    <source>
        <dbReference type="UniProtKB" id="Q9HC44"/>
    </source>
</evidence>
<evidence type="ECO:0000256" key="2">
    <source>
        <dbReference type="SAM" id="MobiDB-lite"/>
    </source>
</evidence>
<evidence type="ECO:0000305" key="3"/>
<name>GPBL1_RAT</name>